<feature type="chain" id="PRO_0000248239" description="Mixed lineage kinase domain-like protein">
    <location>
        <begin position="1"/>
        <end position="471"/>
    </location>
</feature>
<feature type="domain" description="Protein kinase" evidence="3">
    <location>
        <begin position="194"/>
        <end position="469"/>
    </location>
</feature>
<feature type="region of interest" description="N-terminal bundle and brace (NBB); mediates INSP6 binding" evidence="11">
    <location>
        <begin position="1"/>
        <end position="149"/>
    </location>
</feature>
<feature type="coiled-coil region" evidence="2">
    <location>
        <begin position="55"/>
        <end position="84"/>
    </location>
</feature>
<feature type="coiled-coil region" evidence="2">
    <location>
        <begin position="139"/>
        <end position="180"/>
    </location>
</feature>
<feature type="binding site" evidence="3">
    <location>
        <begin position="209"/>
        <end position="217"/>
    </location>
    <ligand>
        <name>ATP</name>
        <dbReference type="ChEBI" id="CHEBI:30616"/>
    </ligand>
</feature>
<feature type="binding site" evidence="16">
    <location>
        <position position="230"/>
    </location>
    <ligand>
        <name>ATP</name>
        <dbReference type="ChEBI" id="CHEBI:30616"/>
    </ligand>
</feature>
<feature type="site" description="Target of necrosulfonamide inhibitor" evidence="5">
    <location>
        <position position="86"/>
    </location>
</feature>
<feature type="modified residue" description="Phosphoserine" evidence="21 22">
    <location>
        <position position="125"/>
    </location>
</feature>
<feature type="modified residue" description="Phosphothreonine; by RIPK3" evidence="5">
    <location>
        <position position="357"/>
    </location>
</feature>
<feature type="modified residue" description="Phosphoserine; by RIPK3" evidence="5 11">
    <location>
        <position position="358"/>
    </location>
</feature>
<feature type="modified residue" description="Phosphoserine; by RIPK3" evidence="1">
    <location>
        <position position="360"/>
    </location>
</feature>
<feature type="splice variant" id="VSP_052133" description="In isoform 2." evidence="14">
    <original>YLPPKCMQEIPQEQIKEIKKEQLSGSP</original>
    <variation>SLESSSGKSPLEISRFKVKNVKTGSAS</variation>
    <location>
        <begin position="179"/>
        <end position="205"/>
    </location>
</feature>
<feature type="splice variant" id="VSP_052134" description="In isoform 2." evidence="14">
    <location>
        <begin position="206"/>
        <end position="413"/>
    </location>
</feature>
<feature type="sequence variant" id="VAR_041350" description="In dbSNP:rs34251827." evidence="4">
    <original>S</original>
    <variation>T</variation>
    <location>
        <position position="52"/>
    </location>
</feature>
<feature type="sequence variant" id="VAR_041351" description="In dbSNP:rs33987771." evidence="4">
    <original>D</original>
    <variation>E</variation>
    <location>
        <position position="100"/>
    </location>
</feature>
<feature type="sequence variant" id="VAR_041352" description="In dbSNP:rs35589326." evidence="4">
    <original>S</original>
    <variation>P</variation>
    <location>
        <position position="132"/>
    </location>
</feature>
<feature type="sequence variant" id="VAR_041353" description="In dbSNP:rs34515646." evidence="4">
    <original>R</original>
    <variation>Q</variation>
    <location>
        <position position="146"/>
    </location>
</feature>
<feature type="sequence variant" id="VAR_041354" description="In dbSNP:rs55929310." evidence="4">
    <original>M</original>
    <variation>L</variation>
    <location>
        <position position="169"/>
    </location>
</feature>
<feature type="sequence variant" id="VAR_041355" description="In a gastric adenocarcinoma sample; somatic mutation; dbSNP:rs1313508921." evidence="4">
    <original>L</original>
    <variation>P</variation>
    <location>
        <position position="291"/>
    </location>
</feature>
<feature type="sequence variant" id="VAR_041356" description="In dbSNP:rs34389205." evidence="4">
    <original>T</original>
    <variation>M</variation>
    <location>
        <position position="364"/>
    </location>
</feature>
<feature type="sequence variant" id="VAR_041357" description="In a gastric adenocarcinoma sample; somatic mutation." evidence="4">
    <original>F</original>
    <variation>I</variation>
    <location>
        <position position="398"/>
    </location>
</feature>
<feature type="sequence variant" id="VAR_041358" description="In dbSNP:rs55987292." evidence="4">
    <original>R</original>
    <variation>H</variation>
    <location>
        <position position="421"/>
    </location>
</feature>
<feature type="mutagenesis site" description="Does not affect formation of homotrimers, while translocation to the plasma membrane on necroptosis induction is impaired; when associated with G-76." evidence="9">
    <original>L</original>
    <variation>G</variation>
    <location>
        <position position="58"/>
    </location>
</feature>
<feature type="mutagenesis site" description="Does not affect formation of homotrimers, while translocation to the plasma membrane on necroptosis induction is impaired; when associated with G-58." evidence="9">
    <original>I</original>
    <variation>G</variation>
    <location>
        <position position="76"/>
    </location>
</feature>
<feature type="mutagenesis site" description="Abolishes binding to necrosulfonamide inhibitor." evidence="5">
    <original>C</original>
    <variation>S</variation>
    <location>
        <position position="86"/>
    </location>
</feature>
<feature type="mutagenesis site" description="Impairs formation of homotrimers and translocation to the plasma membrane on necroptosis induction; when associated with G-165." evidence="9">
    <original>L</original>
    <variation>G</variation>
    <location>
        <position position="162"/>
    </location>
</feature>
<feature type="mutagenesis site" description="Impairs formation of homotrimers and translocation to the plasma membrane on necroptosis induction; when associated with G-162." evidence="9">
    <original>L</original>
    <variation>G</variation>
    <location>
        <position position="165"/>
    </location>
</feature>
<feature type="mutagenesis site" description="Abolishes ATP-binding." evidence="8">
    <original>K</original>
    <variation>M</variation>
    <location>
        <position position="230"/>
    </location>
</feature>
<feature type="mutagenesis site" description="Impairs ATP-binding." evidence="8">
    <original>K</original>
    <variation>N</variation>
    <location>
        <position position="331"/>
    </location>
</feature>
<feature type="mutagenesis site" description="Binds ATP with an enhanced affinity." evidence="8">
    <original>E</original>
    <variation>K</variation>
    <location>
        <position position="351"/>
    </location>
</feature>
<feature type="mutagenesis site" description="Mimics phosphorylation state; acts as a dominant-negative mutant that impairs necroptosis.">
    <original>TS</original>
    <variation>ED</variation>
    <location>
        <begin position="357"/>
        <end position="358"/>
    </location>
</feature>
<feature type="mutagenesis site" description="No effect. Abolishes ability to mediate necroptosis; when associated with A-358." evidence="5">
    <original>T</original>
    <variation>A</variation>
    <location>
        <position position="357"/>
    </location>
</feature>
<feature type="mutagenesis site" description="No effect. Abolishes ability to mediate necroptosis; when associated with A-357." evidence="5">
    <original>S</original>
    <variation>A</variation>
    <location>
        <position position="358"/>
    </location>
</feature>
<feature type="helix" evidence="26">
    <location>
        <begin position="2"/>
        <end position="20"/>
    </location>
</feature>
<feature type="strand" evidence="27">
    <location>
        <begin position="22"/>
        <end position="24"/>
    </location>
</feature>
<feature type="helix" evidence="26">
    <location>
        <begin position="25"/>
        <end position="46"/>
    </location>
</feature>
<feature type="helix" evidence="26">
    <location>
        <begin position="56"/>
        <end position="79"/>
    </location>
</feature>
<feature type="helix" evidence="26">
    <location>
        <begin position="82"/>
        <end position="90"/>
    </location>
</feature>
<feature type="strand" evidence="23">
    <location>
        <begin position="93"/>
        <end position="96"/>
    </location>
</feature>
<feature type="helix" evidence="26">
    <location>
        <begin position="99"/>
        <end position="120"/>
    </location>
</feature>
<feature type="turn" evidence="23">
    <location>
        <begin position="128"/>
        <end position="132"/>
    </location>
</feature>
<feature type="helix" evidence="26">
    <location>
        <begin position="133"/>
        <end position="148"/>
    </location>
</feature>
<feature type="helix" evidence="24">
    <location>
        <begin position="198"/>
        <end position="201"/>
    </location>
</feature>
<feature type="strand" evidence="25">
    <location>
        <begin position="202"/>
        <end position="204"/>
    </location>
</feature>
<feature type="strand" evidence="24">
    <location>
        <begin position="207"/>
        <end position="211"/>
    </location>
</feature>
<feature type="strand" evidence="24">
    <location>
        <begin position="213"/>
        <end position="222"/>
    </location>
</feature>
<feature type="strand" evidence="24">
    <location>
        <begin position="225"/>
        <end position="232"/>
    </location>
</feature>
<feature type="helix" evidence="24">
    <location>
        <begin position="240"/>
        <end position="256"/>
    </location>
</feature>
<feature type="strand" evidence="24">
    <location>
        <begin position="265"/>
        <end position="271"/>
    </location>
</feature>
<feature type="strand" evidence="24">
    <location>
        <begin position="274"/>
        <end position="276"/>
    </location>
</feature>
<feature type="strand" evidence="24">
    <location>
        <begin position="278"/>
        <end position="284"/>
    </location>
</feature>
<feature type="helix" evidence="24">
    <location>
        <begin position="291"/>
        <end position="297"/>
    </location>
</feature>
<feature type="helix" evidence="24">
    <location>
        <begin position="303"/>
        <end position="322"/>
    </location>
</feature>
<feature type="strand" evidence="24">
    <location>
        <begin position="323"/>
        <end position="325"/>
    </location>
</feature>
<feature type="helix" evidence="24">
    <location>
        <begin position="334"/>
        <end position="336"/>
    </location>
</feature>
<feature type="strand" evidence="24">
    <location>
        <begin position="337"/>
        <end position="339"/>
    </location>
</feature>
<feature type="strand" evidence="24">
    <location>
        <begin position="345"/>
        <end position="347"/>
    </location>
</feature>
<feature type="strand" evidence="29">
    <location>
        <begin position="349"/>
        <end position="352"/>
    </location>
</feature>
<feature type="helix" evidence="29">
    <location>
        <begin position="353"/>
        <end position="359"/>
    </location>
</feature>
<feature type="turn" evidence="28">
    <location>
        <begin position="360"/>
        <end position="362"/>
    </location>
</feature>
<feature type="helix" evidence="24">
    <location>
        <begin position="373"/>
        <end position="376"/>
    </location>
</feature>
<feature type="helix" evidence="24">
    <location>
        <begin position="379"/>
        <end position="383"/>
    </location>
</feature>
<feature type="helix" evidence="24">
    <location>
        <begin position="391"/>
        <end position="407"/>
    </location>
</feature>
<feature type="turn" evidence="24">
    <location>
        <begin position="411"/>
        <end position="414"/>
    </location>
</feature>
<feature type="helix" evidence="24">
    <location>
        <begin position="417"/>
        <end position="425"/>
    </location>
</feature>
<feature type="strand" evidence="25">
    <location>
        <begin position="435"/>
        <end position="437"/>
    </location>
</feature>
<feature type="helix" evidence="24">
    <location>
        <begin position="439"/>
        <end position="448"/>
    </location>
</feature>
<feature type="helix" evidence="24">
    <location>
        <begin position="453"/>
        <end position="455"/>
    </location>
</feature>
<feature type="helix" evidence="24">
    <location>
        <begin position="459"/>
        <end position="467"/>
    </location>
</feature>
<gene>
    <name evidence="15 20" type="primary">MLKL</name>
</gene>
<reference evidence="16" key="1">
    <citation type="journal article" date="2002" name="Science">
        <title>The protein kinase complement of the human genome.</title>
        <authorList>
            <person name="Manning G."/>
            <person name="Whyte D.B."/>
            <person name="Martinez R."/>
            <person name="Hunter T."/>
            <person name="Sudarsanam S."/>
        </authorList>
    </citation>
    <scope>NUCLEOTIDE SEQUENCE [MRNA] (ISOFORM 1)</scope>
    <scope>NOMENCLATURE</scope>
</reference>
<reference evidence="16 19" key="2">
    <citation type="journal article" date="2004" name="Nat. Genet.">
        <title>Complete sequencing and characterization of 21,243 full-length human cDNAs.</title>
        <authorList>
            <person name="Ota T."/>
            <person name="Suzuki Y."/>
            <person name="Nishikawa T."/>
            <person name="Otsuki T."/>
            <person name="Sugiyama T."/>
            <person name="Irie R."/>
            <person name="Wakamatsu A."/>
            <person name="Hayashi K."/>
            <person name="Sato H."/>
            <person name="Nagai K."/>
            <person name="Kimura K."/>
            <person name="Makita H."/>
            <person name="Sekine M."/>
            <person name="Obayashi M."/>
            <person name="Nishi T."/>
            <person name="Shibahara T."/>
            <person name="Tanaka T."/>
            <person name="Ishii S."/>
            <person name="Yamamoto J."/>
            <person name="Saito K."/>
            <person name="Kawai Y."/>
            <person name="Isono Y."/>
            <person name="Nakamura Y."/>
            <person name="Nagahari K."/>
            <person name="Murakami K."/>
            <person name="Yasuda T."/>
            <person name="Iwayanagi T."/>
            <person name="Wagatsuma M."/>
            <person name="Shiratori A."/>
            <person name="Sudo H."/>
            <person name="Hosoiri T."/>
            <person name="Kaku Y."/>
            <person name="Kodaira H."/>
            <person name="Kondo H."/>
            <person name="Sugawara M."/>
            <person name="Takahashi M."/>
            <person name="Kanda K."/>
            <person name="Yokoi T."/>
            <person name="Furuya T."/>
            <person name="Kikkawa E."/>
            <person name="Omura Y."/>
            <person name="Abe K."/>
            <person name="Kamihara K."/>
            <person name="Katsuta N."/>
            <person name="Sato K."/>
            <person name="Tanikawa M."/>
            <person name="Yamazaki M."/>
            <person name="Ninomiya K."/>
            <person name="Ishibashi T."/>
            <person name="Yamashita H."/>
            <person name="Murakawa K."/>
            <person name="Fujimori K."/>
            <person name="Tanai H."/>
            <person name="Kimata M."/>
            <person name="Watanabe M."/>
            <person name="Hiraoka S."/>
            <person name="Chiba Y."/>
            <person name="Ishida S."/>
            <person name="Ono Y."/>
            <person name="Takiguchi S."/>
            <person name="Watanabe S."/>
            <person name="Yosida M."/>
            <person name="Hotuta T."/>
            <person name="Kusano J."/>
            <person name="Kanehori K."/>
            <person name="Takahashi-Fujii A."/>
            <person name="Hara H."/>
            <person name="Tanase T.-O."/>
            <person name="Nomura Y."/>
            <person name="Togiya S."/>
            <person name="Komai F."/>
            <person name="Hara R."/>
            <person name="Takeuchi K."/>
            <person name="Arita M."/>
            <person name="Imose N."/>
            <person name="Musashino K."/>
            <person name="Yuuki H."/>
            <person name="Oshima A."/>
            <person name="Sasaki N."/>
            <person name="Aotsuka S."/>
            <person name="Yoshikawa Y."/>
            <person name="Matsunawa H."/>
            <person name="Ichihara T."/>
            <person name="Shiohata N."/>
            <person name="Sano S."/>
            <person name="Moriya S."/>
            <person name="Momiyama H."/>
            <person name="Satoh N."/>
            <person name="Takami S."/>
            <person name="Terashima Y."/>
            <person name="Suzuki O."/>
            <person name="Nakagawa S."/>
            <person name="Senoh A."/>
            <person name="Mizoguchi H."/>
            <person name="Goto Y."/>
            <person name="Shimizu F."/>
            <person name="Wakebe H."/>
            <person name="Hishigaki H."/>
            <person name="Watanabe T."/>
            <person name="Sugiyama A."/>
            <person name="Takemoto M."/>
            <person name="Kawakami B."/>
            <person name="Yamazaki M."/>
            <person name="Watanabe K."/>
            <person name="Kumagai A."/>
            <person name="Itakura S."/>
            <person name="Fukuzumi Y."/>
            <person name="Fujimori Y."/>
            <person name="Komiyama M."/>
            <person name="Tashiro H."/>
            <person name="Tanigami A."/>
            <person name="Fujiwara T."/>
            <person name="Ono T."/>
            <person name="Yamada K."/>
            <person name="Fujii Y."/>
            <person name="Ozaki K."/>
            <person name="Hirao M."/>
            <person name="Ohmori Y."/>
            <person name="Kawabata A."/>
            <person name="Hikiji T."/>
            <person name="Kobatake N."/>
            <person name="Inagaki H."/>
            <person name="Ikema Y."/>
            <person name="Okamoto S."/>
            <person name="Okitani R."/>
            <person name="Kawakami T."/>
            <person name="Noguchi S."/>
            <person name="Itoh T."/>
            <person name="Shigeta K."/>
            <person name="Senba T."/>
            <person name="Matsumura K."/>
            <person name="Nakajima Y."/>
            <person name="Mizuno T."/>
            <person name="Morinaga M."/>
            <person name="Sasaki M."/>
            <person name="Togashi T."/>
            <person name="Oyama M."/>
            <person name="Hata H."/>
            <person name="Watanabe M."/>
            <person name="Komatsu T."/>
            <person name="Mizushima-Sugano J."/>
            <person name="Satoh T."/>
            <person name="Shirai Y."/>
            <person name="Takahashi Y."/>
            <person name="Nakagawa K."/>
            <person name="Okumura K."/>
            <person name="Nagase T."/>
            <person name="Nomura N."/>
            <person name="Kikuchi H."/>
            <person name="Masuho Y."/>
            <person name="Yamashita R."/>
            <person name="Nakai K."/>
            <person name="Yada T."/>
            <person name="Nakamura Y."/>
            <person name="Ohara O."/>
            <person name="Isogai T."/>
            <person name="Sugano S."/>
        </authorList>
    </citation>
    <scope>NUCLEOTIDE SEQUENCE [LARGE SCALE MRNA] (ISOFORM 1)</scope>
    <source>
        <tissue evidence="19">Chondrocyte</tissue>
    </source>
</reference>
<reference key="3">
    <citation type="journal article" date="2004" name="Nature">
        <title>The sequence and analysis of duplication-rich human chromosome 16.</title>
        <authorList>
            <person name="Martin J."/>
            <person name="Han C."/>
            <person name="Gordon L.A."/>
            <person name="Terry A."/>
            <person name="Prabhakar S."/>
            <person name="She X."/>
            <person name="Xie G."/>
            <person name="Hellsten U."/>
            <person name="Chan Y.M."/>
            <person name="Altherr M."/>
            <person name="Couronne O."/>
            <person name="Aerts A."/>
            <person name="Bajorek E."/>
            <person name="Black S."/>
            <person name="Blumer H."/>
            <person name="Branscomb E."/>
            <person name="Brown N.C."/>
            <person name="Bruno W.J."/>
            <person name="Buckingham J.M."/>
            <person name="Callen D.F."/>
            <person name="Campbell C.S."/>
            <person name="Campbell M.L."/>
            <person name="Campbell E.W."/>
            <person name="Caoile C."/>
            <person name="Challacombe J.F."/>
            <person name="Chasteen L.A."/>
            <person name="Chertkov O."/>
            <person name="Chi H.C."/>
            <person name="Christensen M."/>
            <person name="Clark L.M."/>
            <person name="Cohn J.D."/>
            <person name="Denys M."/>
            <person name="Detter J.C."/>
            <person name="Dickson M."/>
            <person name="Dimitrijevic-Bussod M."/>
            <person name="Escobar J."/>
            <person name="Fawcett J.J."/>
            <person name="Flowers D."/>
            <person name="Fotopulos D."/>
            <person name="Glavina T."/>
            <person name="Gomez M."/>
            <person name="Gonzales E."/>
            <person name="Goodstein D."/>
            <person name="Goodwin L.A."/>
            <person name="Grady D.L."/>
            <person name="Grigoriev I."/>
            <person name="Groza M."/>
            <person name="Hammon N."/>
            <person name="Hawkins T."/>
            <person name="Haydu L."/>
            <person name="Hildebrand C.E."/>
            <person name="Huang W."/>
            <person name="Israni S."/>
            <person name="Jett J."/>
            <person name="Jewett P.B."/>
            <person name="Kadner K."/>
            <person name="Kimball H."/>
            <person name="Kobayashi A."/>
            <person name="Krawczyk M.-C."/>
            <person name="Leyba T."/>
            <person name="Longmire J.L."/>
            <person name="Lopez F."/>
            <person name="Lou Y."/>
            <person name="Lowry S."/>
            <person name="Ludeman T."/>
            <person name="Manohar C.F."/>
            <person name="Mark G.A."/>
            <person name="McMurray K.L."/>
            <person name="Meincke L.J."/>
            <person name="Morgan J."/>
            <person name="Moyzis R.K."/>
            <person name="Mundt M.O."/>
            <person name="Munk A.C."/>
            <person name="Nandkeshwar R.D."/>
            <person name="Pitluck S."/>
            <person name="Pollard M."/>
            <person name="Predki P."/>
            <person name="Parson-Quintana B."/>
            <person name="Ramirez L."/>
            <person name="Rash S."/>
            <person name="Retterer J."/>
            <person name="Ricke D.O."/>
            <person name="Robinson D.L."/>
            <person name="Rodriguez A."/>
            <person name="Salamov A."/>
            <person name="Saunders E.H."/>
            <person name="Scott D."/>
            <person name="Shough T."/>
            <person name="Stallings R.L."/>
            <person name="Stalvey M."/>
            <person name="Sutherland R.D."/>
            <person name="Tapia R."/>
            <person name="Tesmer J.G."/>
            <person name="Thayer N."/>
            <person name="Thompson L.S."/>
            <person name="Tice H."/>
            <person name="Torney D.C."/>
            <person name="Tran-Gyamfi M."/>
            <person name="Tsai M."/>
            <person name="Ulanovsky L.E."/>
            <person name="Ustaszewska A."/>
            <person name="Vo N."/>
            <person name="White P.S."/>
            <person name="Williams A.L."/>
            <person name="Wills P.L."/>
            <person name="Wu J.-R."/>
            <person name="Wu K."/>
            <person name="Yang J."/>
            <person name="DeJong P."/>
            <person name="Bruce D."/>
            <person name="Doggett N.A."/>
            <person name="Deaven L."/>
            <person name="Schmutz J."/>
            <person name="Grimwood J."/>
            <person name="Richardson P."/>
            <person name="Rokhsar D.S."/>
            <person name="Eichler E.E."/>
            <person name="Gilna P."/>
            <person name="Lucas S.M."/>
            <person name="Myers R.M."/>
            <person name="Rubin E.M."/>
            <person name="Pennacchio L.A."/>
        </authorList>
    </citation>
    <scope>NUCLEOTIDE SEQUENCE [LARGE SCALE GENOMIC DNA]</scope>
</reference>
<reference evidence="16 18" key="4">
    <citation type="journal article" date="2004" name="Genome Res.">
        <title>The status, quality, and expansion of the NIH full-length cDNA project: the Mammalian Gene Collection (MGC).</title>
        <authorList>
            <consortium name="The MGC Project Team"/>
        </authorList>
    </citation>
    <scope>NUCLEOTIDE SEQUENCE [LARGE SCALE MRNA] (ISOFORM 2)</scope>
    <source>
        <tissue evidence="18">Leukocyte</tissue>
    </source>
</reference>
<reference key="5">
    <citation type="journal article" date="2008" name="Mol. Cell">
        <title>Kinase-selective enrichment enables quantitative phosphoproteomics of the kinome across the cell cycle.</title>
        <authorList>
            <person name="Daub H."/>
            <person name="Olsen J.V."/>
            <person name="Bairlein M."/>
            <person name="Gnad F."/>
            <person name="Oppermann F.S."/>
            <person name="Korner R."/>
            <person name="Greff Z."/>
            <person name="Keri G."/>
            <person name="Stemmann O."/>
            <person name="Mann M."/>
        </authorList>
    </citation>
    <scope>PHOSPHORYLATION [LARGE SCALE ANALYSIS] AT SER-125</scope>
    <scope>IDENTIFICATION BY MASS SPECTROMETRY [LARGE SCALE ANALYSIS]</scope>
    <source>
        <tissue>Cervix carcinoma</tissue>
    </source>
</reference>
<reference key="6">
    <citation type="journal article" date="2008" name="Proc. Natl. Acad. Sci. U.S.A.">
        <title>A quantitative atlas of mitotic phosphorylation.</title>
        <authorList>
            <person name="Dephoure N."/>
            <person name="Zhou C."/>
            <person name="Villen J."/>
            <person name="Beausoleil S.A."/>
            <person name="Bakalarski C.E."/>
            <person name="Elledge S.J."/>
            <person name="Gygi S.P."/>
        </authorList>
    </citation>
    <scope>PHOSPHORYLATION [LARGE SCALE ANALYSIS] AT SER-125</scope>
    <scope>IDENTIFICATION BY MASS SPECTROMETRY [LARGE SCALE ANALYSIS]</scope>
    <source>
        <tissue>Cervix carcinoma</tissue>
    </source>
</reference>
<reference key="7">
    <citation type="journal article" date="2009" name="Sci. Signal.">
        <title>Quantitative phosphoproteomic analysis of T cell receptor signaling reveals system-wide modulation of protein-protein interactions.</title>
        <authorList>
            <person name="Mayya V."/>
            <person name="Lundgren D.H."/>
            <person name="Hwang S.-I."/>
            <person name="Rezaul K."/>
            <person name="Wu L."/>
            <person name="Eng J.K."/>
            <person name="Rodionov V."/>
            <person name="Han D.K."/>
        </authorList>
    </citation>
    <scope>IDENTIFICATION BY MASS SPECTROMETRY [LARGE SCALE ANALYSIS]</scope>
    <source>
        <tissue>Leukemic T-cell</tissue>
    </source>
</reference>
<reference key="8">
    <citation type="journal article" date="2010" name="Sci. Signal.">
        <title>Quantitative phosphoproteomics reveals widespread full phosphorylation site occupancy during mitosis.</title>
        <authorList>
            <person name="Olsen J.V."/>
            <person name="Vermeulen M."/>
            <person name="Santamaria A."/>
            <person name="Kumar C."/>
            <person name="Miller M.L."/>
            <person name="Jensen L.J."/>
            <person name="Gnad F."/>
            <person name="Cox J."/>
            <person name="Jensen T.S."/>
            <person name="Nigg E.A."/>
            <person name="Brunak S."/>
            <person name="Mann M."/>
        </authorList>
    </citation>
    <scope>IDENTIFICATION BY MASS SPECTROMETRY [LARGE SCALE ANALYSIS]</scope>
    <source>
        <tissue>Cervix carcinoma</tissue>
    </source>
</reference>
<reference key="9">
    <citation type="journal article" date="2011" name="BMC Syst. Biol.">
        <title>Initial characterization of the human central proteome.</title>
        <authorList>
            <person name="Burkard T.R."/>
            <person name="Planyavsky M."/>
            <person name="Kaupe I."/>
            <person name="Breitwieser F.P."/>
            <person name="Buerckstuemmer T."/>
            <person name="Bennett K.L."/>
            <person name="Superti-Furga G."/>
            <person name="Colinge J."/>
        </authorList>
    </citation>
    <scope>IDENTIFICATION BY MASS SPECTROMETRY [LARGE SCALE ANALYSIS]</scope>
</reference>
<reference key="10">
    <citation type="journal article" date="2012" name="Cell">
        <title>Mixed lineage kinase domain-like protein mediates necrosis signaling downstream of RIP3 kinase.</title>
        <authorList>
            <person name="Sun L."/>
            <person name="Wang H."/>
            <person name="Wang Z."/>
            <person name="He S."/>
            <person name="Chen S."/>
            <person name="Liao D."/>
            <person name="Wang L."/>
            <person name="Yan J."/>
            <person name="Liu W."/>
            <person name="Lei X."/>
            <person name="Wang X."/>
        </authorList>
    </citation>
    <scope>FUNCTION</scope>
    <scope>INTERACTION WITH RIPK3</scope>
    <scope>ACTIVITY REGULATION</scope>
    <scope>PHOSPHORYLATION AT THR-357 AND SER-358</scope>
    <scope>MUTAGENESIS OF CYS-86; THR-357 AND SER-358</scope>
</reference>
<reference key="11">
    <citation type="journal article" date="2012" name="Cell">
        <title>The mitochondrial phosphatase PGAM5 functions at the convergence point of multiple necrotic death pathways.</title>
        <authorList>
            <person name="Wang Z."/>
            <person name="Jiang H."/>
            <person name="Chen S."/>
            <person name="Du F."/>
            <person name="Wang X."/>
        </authorList>
    </citation>
    <scope>FUNCTION</scope>
    <scope>IDENTIFICATION IN COMPLEX WITH PGAM5; RIPK1 AND RIPK3</scope>
</reference>
<reference key="12">
    <citation type="journal article" date="2012" name="Proc. Natl. Acad. Sci. U.S.A.">
        <title>Mixed lineage kinase domain-like is a key receptor interacting protein 3 downstream component of TNF-induced necrosis.</title>
        <authorList>
            <person name="Zhao J."/>
            <person name="Jitkaew S."/>
            <person name="Cai Z."/>
            <person name="Choksi S."/>
            <person name="Li Q."/>
            <person name="Luo J."/>
            <person name="Liu Z.G."/>
        </authorList>
    </citation>
    <scope>FUNCTION</scope>
    <scope>INTERACTION WITH RIPK3</scope>
</reference>
<reference key="13">
    <citation type="journal article" date="2014" name="Nat. Cell Biol.">
        <title>Plasma membrane translocation of trimerized MLKL protein is required for TNF-induced necroptosis.</title>
        <authorList>
            <person name="Cai Z."/>
            <person name="Jitkaew S."/>
            <person name="Zhao J."/>
            <person name="Chiang H.C."/>
            <person name="Choksi S."/>
            <person name="Liu J."/>
            <person name="Ward Y."/>
            <person name="Wu L.G."/>
            <person name="Liu Z.G."/>
        </authorList>
    </citation>
    <scope>FUNCTION</scope>
    <scope>SUBCELLULAR LOCATION</scope>
    <scope>SUBUNIT</scope>
    <scope>MUTAGENESIS OF LEU-58; ILE-76; LEU-162 AND LEU-165</scope>
</reference>
<reference key="14">
    <citation type="journal article" date="2018" name="Mol. Cell">
        <title>PELI1 selectively targets kinase-active RIP3 for ubiquitylation-dependent proteasomal degradation.</title>
        <authorList>
            <person name="Choi S.W."/>
            <person name="Park H.H."/>
            <person name="Kim S."/>
            <person name="Chung J.M."/>
            <person name="Noh H.J."/>
            <person name="Kim S.K."/>
            <person name="Song H.K."/>
            <person name="Lee C.W."/>
            <person name="Morgan M.J."/>
            <person name="Kang H.C."/>
            <person name="Kim Y.S."/>
        </authorList>
    </citation>
    <scope>INTERACTION WITH RIPK3</scope>
</reference>
<reference key="15">
    <citation type="journal article" date="2018" name="Mol. Cell">
        <title>MLKL requires the inositol phosphate code to execute necroptosis.</title>
        <authorList>
            <person name="Dovey C.M."/>
            <person name="Diep J."/>
            <person name="Clarke B.P."/>
            <person name="Hale A.T."/>
            <person name="McNamara D.E."/>
            <person name="Guo H."/>
            <person name="Brown N.W. Jr."/>
            <person name="Cao J.Y."/>
            <person name="Grace C.R."/>
            <person name="Gough P.J."/>
            <person name="Bertin J."/>
            <person name="Dixon S.J."/>
            <person name="Fiedler D."/>
            <person name="Mocarski E.S."/>
            <person name="Kaiser W.J."/>
            <person name="Moldoveanu T."/>
            <person name="York J.D."/>
            <person name="Carette J.E."/>
        </authorList>
    </citation>
    <scope>FUNCTION</scope>
    <scope>ACTIVITY REGULATION</scope>
    <scope>PHOSPHORYLATION AT SER-358</scope>
    <scope>SUBUNIT</scope>
    <scope>REGION NBB</scope>
    <scope>SUBCELLULAR LOCATION</scope>
</reference>
<reference key="16">
    <citation type="journal article" date="2014" name="Biochem. J.">
        <title>Insights into the evolution of divergent nucleotide-binding mechanisms among pseudokinases revealed by crystal structures of human and mouse MLKL.</title>
        <authorList>
            <person name="Murphy J.M."/>
            <person name="Lucet I.S."/>
            <person name="Hildebrand J.M."/>
            <person name="Tanzer M.C."/>
            <person name="Young S.N."/>
            <person name="Sharma P."/>
            <person name="Lessene G."/>
            <person name="Alexander W.S."/>
            <person name="Babon J.J."/>
            <person name="Silke J."/>
            <person name="Czabotar P.E."/>
        </authorList>
    </citation>
    <scope>X-RAY CRYSTALLOGRAPHY (1.7 ANGSTROMS) OF 189-471</scope>
    <scope>ATP-BINDING</scope>
    <scope>MUTAGENESIS OF LYS-230; LYS-331 AND GLU-351</scope>
</reference>
<reference key="17">
    <citation type="journal article" date="2013" name="Cell Rep.">
        <title>Structural insights into RIP3-mediated necroptotic signaling.</title>
        <authorList>
            <person name="Xie T."/>
            <person name="Peng W."/>
            <person name="Yan C."/>
            <person name="Wu J."/>
            <person name="Gong X."/>
            <person name="Shi Y."/>
        </authorList>
    </citation>
    <scope>X-RAY CRYSTALLOGRAPHY (1.9 ANGSTROMS) OF 179-471</scope>
</reference>
<reference key="18">
    <citation type="journal article" date="2007" name="Nature">
        <title>Patterns of somatic mutation in human cancer genomes.</title>
        <authorList>
            <person name="Greenman C."/>
            <person name="Stephens P."/>
            <person name="Smith R."/>
            <person name="Dalgliesh G.L."/>
            <person name="Hunter C."/>
            <person name="Bignell G."/>
            <person name="Davies H."/>
            <person name="Teague J."/>
            <person name="Butler A."/>
            <person name="Stevens C."/>
            <person name="Edkins S."/>
            <person name="O'Meara S."/>
            <person name="Vastrik I."/>
            <person name="Schmidt E.E."/>
            <person name="Avis T."/>
            <person name="Barthorpe S."/>
            <person name="Bhamra G."/>
            <person name="Buck G."/>
            <person name="Choudhury B."/>
            <person name="Clements J."/>
            <person name="Cole J."/>
            <person name="Dicks E."/>
            <person name="Forbes S."/>
            <person name="Gray K."/>
            <person name="Halliday K."/>
            <person name="Harrison R."/>
            <person name="Hills K."/>
            <person name="Hinton J."/>
            <person name="Jenkinson A."/>
            <person name="Jones D."/>
            <person name="Menzies A."/>
            <person name="Mironenko T."/>
            <person name="Perry J."/>
            <person name="Raine K."/>
            <person name="Richardson D."/>
            <person name="Shepherd R."/>
            <person name="Small A."/>
            <person name="Tofts C."/>
            <person name="Varian J."/>
            <person name="Webb T."/>
            <person name="West S."/>
            <person name="Widaa S."/>
            <person name="Yates A."/>
            <person name="Cahill D.P."/>
            <person name="Louis D.N."/>
            <person name="Goldstraw P."/>
            <person name="Nicholson A.G."/>
            <person name="Brasseur F."/>
            <person name="Looijenga L."/>
            <person name="Weber B.L."/>
            <person name="Chiew Y.-E."/>
            <person name="DeFazio A."/>
            <person name="Greaves M.F."/>
            <person name="Green A.R."/>
            <person name="Campbell P."/>
            <person name="Birney E."/>
            <person name="Easton D.F."/>
            <person name="Chenevix-Trench G."/>
            <person name="Tan M.-H."/>
            <person name="Khoo S.K."/>
            <person name="Teh B.T."/>
            <person name="Yuen S.T."/>
            <person name="Leung S.Y."/>
            <person name="Wooster R."/>
            <person name="Futreal P.A."/>
            <person name="Stratton M.R."/>
        </authorList>
    </citation>
    <scope>VARIANTS [LARGE SCALE ANALYSIS] THR-52; GLU-100; PRO-132; GLN-146; LEU-169; PRO-291; MET-364; ILE-398 AND HIS-421</scope>
</reference>
<keyword id="KW-0002">3D-structure</keyword>
<keyword id="KW-0025">Alternative splicing</keyword>
<keyword id="KW-0067">ATP-binding</keyword>
<keyword id="KW-1003">Cell membrane</keyword>
<keyword id="KW-0175">Coiled coil</keyword>
<keyword id="KW-0963">Cytoplasm</keyword>
<keyword id="KW-0472">Membrane</keyword>
<keyword id="KW-1210">Necrosis</keyword>
<keyword id="KW-0547">Nucleotide-binding</keyword>
<keyword id="KW-0539">Nucleus</keyword>
<keyword id="KW-0597">Phosphoprotein</keyword>
<keyword id="KW-1267">Proteomics identification</keyword>
<keyword id="KW-1185">Reference proteome</keyword>
<evidence type="ECO:0000250" key="1">
    <source>
        <dbReference type="UniProtKB" id="Q9D2Y4"/>
    </source>
</evidence>
<evidence type="ECO:0000255" key="2"/>
<evidence type="ECO:0000255" key="3">
    <source>
        <dbReference type="PROSITE-ProRule" id="PRU00159"/>
    </source>
</evidence>
<evidence type="ECO:0000269" key="4">
    <source>
    </source>
</evidence>
<evidence type="ECO:0000269" key="5">
    <source>
    </source>
</evidence>
<evidence type="ECO:0000269" key="6">
    <source>
    </source>
</evidence>
<evidence type="ECO:0000269" key="7">
    <source>
    </source>
</evidence>
<evidence type="ECO:0000269" key="8">
    <source>
    </source>
</evidence>
<evidence type="ECO:0000269" key="9">
    <source>
    </source>
</evidence>
<evidence type="ECO:0000269" key="10">
    <source>
    </source>
</evidence>
<evidence type="ECO:0000269" key="11">
    <source>
    </source>
</evidence>
<evidence type="ECO:0000303" key="12">
    <source>
    </source>
</evidence>
<evidence type="ECO:0000303" key="13">
    <source>
    </source>
</evidence>
<evidence type="ECO:0000303" key="14">
    <source>
    </source>
</evidence>
<evidence type="ECO:0000303" key="15">
    <source>
    </source>
</evidence>
<evidence type="ECO:0000305" key="16"/>
<evidence type="ECO:0000305" key="17">
    <source>
    </source>
</evidence>
<evidence type="ECO:0000312" key="18">
    <source>
        <dbReference type="EMBL" id="AAH28141.1"/>
    </source>
</evidence>
<evidence type="ECO:0000312" key="19">
    <source>
        <dbReference type="EMBL" id="BAC03728.1"/>
    </source>
</evidence>
<evidence type="ECO:0000312" key="20">
    <source>
        <dbReference type="HGNC" id="HGNC:26617"/>
    </source>
</evidence>
<evidence type="ECO:0007744" key="21">
    <source>
    </source>
</evidence>
<evidence type="ECO:0007744" key="22">
    <source>
    </source>
</evidence>
<evidence type="ECO:0007829" key="23">
    <source>
        <dbReference type="PDB" id="2MSV"/>
    </source>
</evidence>
<evidence type="ECO:0007829" key="24">
    <source>
        <dbReference type="PDB" id="4MWI"/>
    </source>
</evidence>
<evidence type="ECO:0007829" key="25">
    <source>
        <dbReference type="PDB" id="6O5Z"/>
    </source>
</evidence>
<evidence type="ECO:0007829" key="26">
    <source>
        <dbReference type="PDB" id="6ZVO"/>
    </source>
</evidence>
<evidence type="ECO:0007829" key="27">
    <source>
        <dbReference type="PDB" id="6ZZ1"/>
    </source>
</evidence>
<evidence type="ECO:0007829" key="28">
    <source>
        <dbReference type="PDB" id="7JXU"/>
    </source>
</evidence>
<evidence type="ECO:0007829" key="29">
    <source>
        <dbReference type="PDB" id="7MON"/>
    </source>
</evidence>
<accession>Q8NB16</accession>
<accession>A6NCE4</accession>
<accession>Q8N6V0</accession>
<dbReference type="EMBL" id="AK091708">
    <property type="protein sequence ID" value="BAC03728.1"/>
    <property type="molecule type" value="mRNA"/>
</dbReference>
<dbReference type="EMBL" id="AC109599">
    <property type="status" value="NOT_ANNOTATED_CDS"/>
    <property type="molecule type" value="Genomic_DNA"/>
</dbReference>
<dbReference type="EMBL" id="BC028141">
    <property type="protein sequence ID" value="AAH28141.1"/>
    <property type="molecule type" value="mRNA"/>
</dbReference>
<dbReference type="CCDS" id="CCDS32487.1">
    <molecule id="Q8NB16-1"/>
</dbReference>
<dbReference type="CCDS" id="CCDS45528.1">
    <molecule id="Q8NB16-2"/>
</dbReference>
<dbReference type="RefSeq" id="NP_001135969.1">
    <molecule id="Q8NB16-2"/>
    <property type="nucleotide sequence ID" value="NM_001142497.3"/>
</dbReference>
<dbReference type="RefSeq" id="NP_689862.1">
    <molecule id="Q8NB16-1"/>
    <property type="nucleotide sequence ID" value="NM_152649.4"/>
</dbReference>
<dbReference type="RefSeq" id="XP_005255891.1">
    <molecule id="Q8NB16-1"/>
    <property type="nucleotide sequence ID" value="XM_005255834.5"/>
</dbReference>
<dbReference type="RefSeq" id="XP_054235719.1">
    <molecule id="Q8NB16-1"/>
    <property type="nucleotide sequence ID" value="XM_054379744.1"/>
</dbReference>
<dbReference type="PDB" id="2MSV">
    <property type="method" value="NMR"/>
    <property type="chains" value="A=1-154"/>
</dbReference>
<dbReference type="PDB" id="4M67">
    <property type="method" value="X-ray"/>
    <property type="resolution" value="1.90 A"/>
    <property type="chains" value="A=179-471"/>
</dbReference>
<dbReference type="PDB" id="4MWI">
    <property type="method" value="X-ray"/>
    <property type="resolution" value="1.70 A"/>
    <property type="chains" value="A=183-471"/>
</dbReference>
<dbReference type="PDB" id="5KNJ">
    <property type="method" value="X-ray"/>
    <property type="resolution" value="2.88 A"/>
    <property type="chains" value="A/B=191-471"/>
</dbReference>
<dbReference type="PDB" id="5KO1">
    <property type="method" value="X-ray"/>
    <property type="resolution" value="2.16 A"/>
    <property type="chains" value="A=191-471"/>
</dbReference>
<dbReference type="PDB" id="6BWK">
    <property type="method" value="X-ray"/>
    <property type="resolution" value="2.79 A"/>
    <property type="chains" value="A=190-471"/>
</dbReference>
<dbReference type="PDB" id="6D74">
    <property type="method" value="NMR"/>
    <property type="chains" value="A=1-156"/>
</dbReference>
<dbReference type="PDB" id="6LK5">
    <property type="method" value="X-ray"/>
    <property type="resolution" value="2.50 A"/>
    <property type="chains" value="A=1-471"/>
</dbReference>
<dbReference type="PDB" id="6LK6">
    <property type="method" value="X-ray"/>
    <property type="resolution" value="2.41 A"/>
    <property type="chains" value="A=179-471"/>
</dbReference>
<dbReference type="PDB" id="6O5Z">
    <property type="method" value="X-ray"/>
    <property type="resolution" value="2.29 A"/>
    <property type="chains" value="A/B=190-471"/>
</dbReference>
<dbReference type="PDB" id="6UX8">
    <property type="method" value="X-ray"/>
    <property type="resolution" value="2.50 A"/>
    <property type="chains" value="A=5-154"/>
</dbReference>
<dbReference type="PDB" id="6ZLE">
    <property type="method" value="NMR"/>
    <property type="chains" value="A=2-154"/>
</dbReference>
<dbReference type="PDB" id="6ZPR">
    <property type="method" value="NMR"/>
    <property type="chains" value="A=2-154"/>
</dbReference>
<dbReference type="PDB" id="6ZVO">
    <property type="method" value="X-ray"/>
    <property type="resolution" value="1.37 A"/>
    <property type="chains" value="A/B/C=2-150"/>
</dbReference>
<dbReference type="PDB" id="6ZZ1">
    <property type="method" value="X-ray"/>
    <property type="resolution" value="1.64 A"/>
    <property type="chains" value="A/B=2-150"/>
</dbReference>
<dbReference type="PDB" id="7JW7">
    <property type="method" value="X-ray"/>
    <property type="resolution" value="2.63 A"/>
    <property type="chains" value="A=190-471"/>
</dbReference>
<dbReference type="PDB" id="7JXU">
    <property type="method" value="X-ray"/>
    <property type="resolution" value="2.44 A"/>
    <property type="chains" value="A/B=190-471"/>
</dbReference>
<dbReference type="PDB" id="7MON">
    <property type="method" value="X-ray"/>
    <property type="resolution" value="2.23 A"/>
    <property type="chains" value="A=190-471"/>
</dbReference>
<dbReference type="PDB" id="7NM2">
    <property type="method" value="NMR"/>
    <property type="chains" value="A=2-154"/>
</dbReference>
<dbReference type="PDB" id="7NM4">
    <property type="method" value="NMR"/>
    <property type="chains" value="A=2-154"/>
</dbReference>
<dbReference type="PDB" id="7NM5">
    <property type="method" value="NMR"/>
    <property type="chains" value="A=2-154"/>
</dbReference>
<dbReference type="PDB" id="8SLZ">
    <property type="method" value="X-ray"/>
    <property type="resolution" value="2.30 A"/>
    <property type="chains" value="A=190-471"/>
</dbReference>
<dbReference type="PDBsum" id="2MSV"/>
<dbReference type="PDBsum" id="4M67"/>
<dbReference type="PDBsum" id="4MWI"/>
<dbReference type="PDBsum" id="5KNJ"/>
<dbReference type="PDBsum" id="5KO1"/>
<dbReference type="PDBsum" id="6BWK"/>
<dbReference type="PDBsum" id="6D74"/>
<dbReference type="PDBsum" id="6LK5"/>
<dbReference type="PDBsum" id="6LK6"/>
<dbReference type="PDBsum" id="6O5Z"/>
<dbReference type="PDBsum" id="6UX8"/>
<dbReference type="PDBsum" id="6ZLE"/>
<dbReference type="PDBsum" id="6ZPR"/>
<dbReference type="PDBsum" id="6ZVO"/>
<dbReference type="PDBsum" id="6ZZ1"/>
<dbReference type="PDBsum" id="7JW7"/>
<dbReference type="PDBsum" id="7JXU"/>
<dbReference type="PDBsum" id="7MON"/>
<dbReference type="PDBsum" id="7NM2"/>
<dbReference type="PDBsum" id="7NM4"/>
<dbReference type="PDBsum" id="7NM5"/>
<dbReference type="PDBsum" id="8SLZ"/>
<dbReference type="BMRB" id="Q8NB16"/>
<dbReference type="SMR" id="Q8NB16"/>
<dbReference type="BioGRID" id="128244">
    <property type="interactions" value="55"/>
</dbReference>
<dbReference type="CORUM" id="Q8NB16"/>
<dbReference type="DIP" id="DIP-41782N"/>
<dbReference type="FunCoup" id="Q8NB16">
    <property type="interactions" value="497"/>
</dbReference>
<dbReference type="IntAct" id="Q8NB16">
    <property type="interactions" value="24"/>
</dbReference>
<dbReference type="MINT" id="Q8NB16"/>
<dbReference type="STRING" id="9606.ENSP00000308351"/>
<dbReference type="BindingDB" id="Q8NB16"/>
<dbReference type="ChEMBL" id="CHEMBL1938217"/>
<dbReference type="DrugCentral" id="Q8NB16"/>
<dbReference type="GuidetoPHARMACOLOGY" id="2106"/>
<dbReference type="TCDB" id="1.A.105.1.1">
    <property type="family name" value="the mixed lineage kinase domain-like (mlkl) family"/>
</dbReference>
<dbReference type="GlyCosmos" id="Q8NB16">
    <property type="glycosylation" value="4 sites, 1 glycan"/>
</dbReference>
<dbReference type="GlyGen" id="Q8NB16">
    <property type="glycosylation" value="4 sites, 1 O-linked glycan (4 sites)"/>
</dbReference>
<dbReference type="iPTMnet" id="Q8NB16"/>
<dbReference type="PhosphoSitePlus" id="Q8NB16"/>
<dbReference type="SwissPalm" id="Q8NB16"/>
<dbReference type="BioMuta" id="MLKL"/>
<dbReference type="DMDM" id="74762545"/>
<dbReference type="CPTAC" id="CPTAC-895"/>
<dbReference type="CPTAC" id="CPTAC-896"/>
<dbReference type="jPOST" id="Q8NB16"/>
<dbReference type="MassIVE" id="Q8NB16"/>
<dbReference type="PaxDb" id="9606-ENSP00000308351"/>
<dbReference type="PeptideAtlas" id="Q8NB16"/>
<dbReference type="ProteomicsDB" id="72718">
    <molecule id="Q8NB16-1"/>
</dbReference>
<dbReference type="ProteomicsDB" id="72719">
    <molecule id="Q8NB16-2"/>
</dbReference>
<dbReference type="Pumba" id="Q8NB16"/>
<dbReference type="ABCD" id="Q8NB16">
    <property type="antibodies" value="4 sequenced antibodies"/>
</dbReference>
<dbReference type="Antibodypedia" id="2097">
    <property type="antibodies" value="397 antibodies from 39 providers"/>
</dbReference>
<dbReference type="DNASU" id="197259"/>
<dbReference type="Ensembl" id="ENST00000306247.11">
    <molecule id="Q8NB16-2"/>
    <property type="protein sequence ID" value="ENSP00000303118.7"/>
    <property type="gene ID" value="ENSG00000168404.13"/>
</dbReference>
<dbReference type="Ensembl" id="ENST00000308807.12">
    <molecule id="Q8NB16-1"/>
    <property type="protein sequence ID" value="ENSP00000308351.7"/>
    <property type="gene ID" value="ENSG00000168404.13"/>
</dbReference>
<dbReference type="GeneID" id="197259"/>
<dbReference type="KEGG" id="hsa:197259"/>
<dbReference type="MANE-Select" id="ENST00000308807.12">
    <property type="protein sequence ID" value="ENSP00000308351.7"/>
    <property type="RefSeq nucleotide sequence ID" value="NM_152649.4"/>
    <property type="RefSeq protein sequence ID" value="NP_689862.1"/>
</dbReference>
<dbReference type="UCSC" id="uc002fdb.3">
    <molecule id="Q8NB16-1"/>
    <property type="organism name" value="human"/>
</dbReference>
<dbReference type="AGR" id="HGNC:26617"/>
<dbReference type="CTD" id="197259"/>
<dbReference type="DisGeNET" id="197259"/>
<dbReference type="GeneCards" id="MLKL"/>
<dbReference type="HGNC" id="HGNC:26617">
    <property type="gene designation" value="MLKL"/>
</dbReference>
<dbReference type="HPA" id="ENSG00000168404">
    <property type="expression patterns" value="Low tissue specificity"/>
</dbReference>
<dbReference type="MalaCards" id="MLKL"/>
<dbReference type="MIM" id="615153">
    <property type="type" value="gene"/>
</dbReference>
<dbReference type="neXtProt" id="NX_Q8NB16"/>
<dbReference type="OpenTargets" id="ENSG00000168404"/>
<dbReference type="PharmGKB" id="PA142671349"/>
<dbReference type="VEuPathDB" id="HostDB:ENSG00000168404"/>
<dbReference type="eggNOG" id="KOG0192">
    <property type="taxonomic scope" value="Eukaryota"/>
</dbReference>
<dbReference type="GeneTree" id="ENSGT00390000016453"/>
<dbReference type="HOGENOM" id="CLU_044216_0_0_1"/>
<dbReference type="InParanoid" id="Q8NB16"/>
<dbReference type="OMA" id="ESKVDWM"/>
<dbReference type="OrthoDB" id="4062651at2759"/>
<dbReference type="PAN-GO" id="Q8NB16">
    <property type="GO annotations" value="0 GO annotations based on evolutionary models"/>
</dbReference>
<dbReference type="PhylomeDB" id="Q8NB16"/>
<dbReference type="TreeFam" id="TF328453"/>
<dbReference type="PathwayCommons" id="Q8NB16"/>
<dbReference type="Reactome" id="R-HSA-3295583">
    <property type="pathway name" value="TRP channels"/>
</dbReference>
<dbReference type="Reactome" id="R-HSA-5213460">
    <property type="pathway name" value="RIPK1-mediated regulated necrosis"/>
</dbReference>
<dbReference type="Reactome" id="R-HSA-5675482">
    <property type="pathway name" value="Regulation of necroptotic cell death"/>
</dbReference>
<dbReference type="Reactome" id="R-HSA-9686347">
    <property type="pathway name" value="Microbial modulation of RIPK1-mediated regulated necrosis"/>
</dbReference>
<dbReference type="SignaLink" id="Q8NB16"/>
<dbReference type="SIGNOR" id="Q8NB16"/>
<dbReference type="BioGRID-ORCS" id="197259">
    <property type="hits" value="17 hits in 1193 CRISPR screens"/>
</dbReference>
<dbReference type="CD-CODE" id="91857CE7">
    <property type="entry name" value="Nucleolus"/>
</dbReference>
<dbReference type="ChiTaRS" id="MLKL">
    <property type="organism name" value="human"/>
</dbReference>
<dbReference type="EvolutionaryTrace" id="Q8NB16"/>
<dbReference type="GenomeRNAi" id="197259"/>
<dbReference type="Pharos" id="Q8NB16">
    <property type="development level" value="Tchem"/>
</dbReference>
<dbReference type="PRO" id="PR:Q8NB16"/>
<dbReference type="Proteomes" id="UP000005640">
    <property type="component" value="Chromosome 16"/>
</dbReference>
<dbReference type="RNAct" id="Q8NB16">
    <property type="molecule type" value="protein"/>
</dbReference>
<dbReference type="Bgee" id="ENSG00000168404">
    <property type="expression patterns" value="Expressed in granulocyte and 164 other cell types or tissues"/>
</dbReference>
<dbReference type="ExpressionAtlas" id="Q8NB16">
    <property type="expression patterns" value="baseline and differential"/>
</dbReference>
<dbReference type="GO" id="GO:0030054">
    <property type="term" value="C:cell junction"/>
    <property type="evidence" value="ECO:0000314"/>
    <property type="project" value="HPA"/>
</dbReference>
<dbReference type="GO" id="GO:0005737">
    <property type="term" value="C:cytoplasm"/>
    <property type="evidence" value="ECO:0000314"/>
    <property type="project" value="UniProtKB"/>
</dbReference>
<dbReference type="GO" id="GO:0005829">
    <property type="term" value="C:cytosol"/>
    <property type="evidence" value="ECO:0000314"/>
    <property type="project" value="HPA"/>
</dbReference>
<dbReference type="GO" id="GO:0005634">
    <property type="term" value="C:nucleus"/>
    <property type="evidence" value="ECO:0000250"/>
    <property type="project" value="UniProtKB"/>
</dbReference>
<dbReference type="GO" id="GO:0005886">
    <property type="term" value="C:plasma membrane"/>
    <property type="evidence" value="ECO:0000314"/>
    <property type="project" value="HPA"/>
</dbReference>
<dbReference type="GO" id="GO:0005524">
    <property type="term" value="F:ATP binding"/>
    <property type="evidence" value="ECO:0000314"/>
    <property type="project" value="UniProtKB"/>
</dbReference>
<dbReference type="GO" id="GO:0042802">
    <property type="term" value="F:identical protein binding"/>
    <property type="evidence" value="ECO:0000353"/>
    <property type="project" value="IntAct"/>
</dbReference>
<dbReference type="GO" id="GO:0019901">
    <property type="term" value="F:protein kinase binding"/>
    <property type="evidence" value="ECO:0007669"/>
    <property type="project" value="Ensembl"/>
</dbReference>
<dbReference type="GO" id="GO:0044877">
    <property type="term" value="F:protein-containing complex binding"/>
    <property type="evidence" value="ECO:0000314"/>
    <property type="project" value="UniProtKB"/>
</dbReference>
<dbReference type="GO" id="GO:0007166">
    <property type="term" value="P:cell surface receptor signaling pathway"/>
    <property type="evidence" value="ECO:0007669"/>
    <property type="project" value="InterPro"/>
</dbReference>
<dbReference type="GO" id="GO:0051607">
    <property type="term" value="P:defense response to virus"/>
    <property type="evidence" value="ECO:0000250"/>
    <property type="project" value="UniProtKB"/>
</dbReference>
<dbReference type="GO" id="GO:0097528">
    <property type="term" value="P:execution phase of necroptosis"/>
    <property type="evidence" value="ECO:0000314"/>
    <property type="project" value="UniProt"/>
</dbReference>
<dbReference type="GO" id="GO:0070266">
    <property type="term" value="P:necroptotic process"/>
    <property type="evidence" value="ECO:0000315"/>
    <property type="project" value="UniProtKB"/>
</dbReference>
<dbReference type="GO" id="GO:0097527">
    <property type="term" value="P:necroptotic signaling pathway"/>
    <property type="evidence" value="ECO:0000315"/>
    <property type="project" value="UniProtKB"/>
</dbReference>
<dbReference type="GO" id="GO:0070207">
    <property type="term" value="P:protein homotrimerization"/>
    <property type="evidence" value="ECO:0000314"/>
    <property type="project" value="UniProtKB"/>
</dbReference>
<dbReference type="CDD" id="cd21037">
    <property type="entry name" value="MLKL_NTD"/>
    <property type="match status" value="1"/>
</dbReference>
<dbReference type="FunFam" id="1.10.510.10:FF:000663">
    <property type="entry name" value="Mixed lineage kinase domain-like pseudokinase"/>
    <property type="match status" value="1"/>
</dbReference>
<dbReference type="FunFam" id="1.20.930.20:FF:000005">
    <property type="entry name" value="Mixed lineage kinase domain-like pseudokinase"/>
    <property type="match status" value="1"/>
</dbReference>
<dbReference type="FunFam" id="3.30.200.20:FF:000437">
    <property type="entry name" value="Mixed lineage kinase domain-like pseudokinase"/>
    <property type="match status" value="1"/>
</dbReference>
<dbReference type="Gene3D" id="1.20.930.20">
    <property type="entry name" value="Adaptor protein Cbl, N-terminal domain"/>
    <property type="match status" value="1"/>
</dbReference>
<dbReference type="Gene3D" id="3.30.200.20">
    <property type="entry name" value="Phosphorylase Kinase, domain 1"/>
    <property type="match status" value="1"/>
</dbReference>
<dbReference type="Gene3D" id="1.10.510.10">
    <property type="entry name" value="Transferase(Phosphotransferase) domain 1"/>
    <property type="match status" value="1"/>
</dbReference>
<dbReference type="InterPro" id="IPR036537">
    <property type="entry name" value="Adaptor_Cbl_N_dom_sf"/>
</dbReference>
<dbReference type="InterPro" id="IPR011009">
    <property type="entry name" value="Kinase-like_dom_sf"/>
</dbReference>
<dbReference type="InterPro" id="IPR054000">
    <property type="entry name" value="MLKL_N"/>
</dbReference>
<dbReference type="InterPro" id="IPR000719">
    <property type="entry name" value="Prot_kinase_dom"/>
</dbReference>
<dbReference type="InterPro" id="IPR001245">
    <property type="entry name" value="Ser-Thr/Tyr_kinase_cat_dom"/>
</dbReference>
<dbReference type="InterPro" id="IPR051681">
    <property type="entry name" value="Ser/Thr_Kinases-Pseudokinases"/>
</dbReference>
<dbReference type="PANTHER" id="PTHR44329:SF298">
    <property type="entry name" value="MIXED LINEAGE KINASE DOMAIN-LIKE PROTEIN"/>
    <property type="match status" value="1"/>
</dbReference>
<dbReference type="PANTHER" id="PTHR44329">
    <property type="entry name" value="SERINE/THREONINE-PROTEIN KINASE TNNI3K-RELATED"/>
    <property type="match status" value="1"/>
</dbReference>
<dbReference type="Pfam" id="PF22215">
    <property type="entry name" value="MLKL_N"/>
    <property type="match status" value="1"/>
</dbReference>
<dbReference type="Pfam" id="PF07714">
    <property type="entry name" value="PK_Tyr_Ser-Thr"/>
    <property type="match status" value="1"/>
</dbReference>
<dbReference type="SUPFAM" id="SSF56112">
    <property type="entry name" value="Protein kinase-like (PK-like)"/>
    <property type="match status" value="1"/>
</dbReference>
<dbReference type="PROSITE" id="PS50011">
    <property type="entry name" value="PROTEIN_KINASE_DOM"/>
    <property type="match status" value="1"/>
</dbReference>
<comment type="function">
    <text evidence="1 5 6 7 9 11">Pseudokinase that plays a key role in TNF-induced necroptosis, a programmed cell death process (PubMed:22265413, PubMed:22265414, PubMed:22421439, PubMed:24316671). Does not have protein kinase activity (PubMed:22265413, PubMed:22265414, PubMed:22421439, PubMed:24316671). Activated following phosphorylation by RIPK3, leading to homotrimerization, localization to the plasma membrane and execution of programmed necrosis characterized by calcium influx and plasma membrane damage (PubMed:22265413, PubMed:22265414, PubMed:22421439, PubMed:24316671). In addition to TNF-induced necroptosis, necroptosis can also take place in the nucleus in response to orthomyxoviruses infection: following activation by ZBP1, MLKL is phosphorylated by RIPK3 in the nucleus, triggering disruption of the nuclear envelope and leakage of cellular DNA into the cytosol.following ZBP1 activation, which senses double-stranded Z-RNA structures, nuclear RIPK3 catalyzes phosphorylation and activation of MLKL, promoting disruption of the nuclear envelope and leakage of cellular DNA into the cytosol (By similarity). Binds to highly phosphorylated inositol phosphates such as inositolhexakisphosphate (InsP6) which is essential for its necroptotic function (PubMed:29883610).</text>
</comment>
<comment type="activity regulation">
    <text evidence="5 11">Activated via binding to highly phosphorylated inositol phosphates such as inositolhexakisphosphate (InsP6) which mediates the release of an N-terminal auto-inhibitory region (PubMed:29883610). Activation requires not only RIPK3-dependent phosphorylation but also binding to highly phosphorylated inositol phosphates (PubMed:29883610). Inhibited by necrosulfonamide, a specific inhibitor of necroptosis that targets Cys-86 (PubMed:22265413).</text>
</comment>
<comment type="subunit">
    <text evidence="5 6 7 9 10 11">Homooligomer (PubMed:29883610). Homotrimer; forms homotrimers on necroptosis induction (PubMed:24316671). Upon TNF-induced necrosis, forms in complex with PGAM5, RIPK1 and RIPK3 (PubMed:22265414). Within this complex, may play a role in the proper targeting of RIPK1-RIPK3 to its downstream effector PGAM5 (PubMed:22265414). Interacts with RIPK3; the interaction is direct and promotes its phosphorylation and subsequent activation (PubMed:22265413, PubMed:22421439, PubMed:29883609).</text>
</comment>
<comment type="interaction">
    <interactant intactId="EBI-1055040">
        <id>Q8NB16</id>
    </interactant>
    <interactant intactId="EBI-298250">
        <id>Q9Y572</id>
        <label>RIPK3</label>
    </interactant>
    <organismsDiffer>false</organismsDiffer>
    <experiments>10</experiments>
</comment>
<comment type="interaction">
    <interactant intactId="EBI-16084674">
        <id>Q8NB16-1</id>
    </interactant>
    <interactant intactId="EBI-16084674">
        <id>Q8NB16-1</id>
        <label>MLKL</label>
    </interactant>
    <organismsDiffer>false</organismsDiffer>
    <experiments>2</experiments>
</comment>
<comment type="interaction">
    <interactant intactId="EBI-19046912">
        <id>Q8NB16-2</id>
    </interactant>
    <interactant intactId="EBI-372273">
        <id>P20618</id>
        <label>PSMB1</label>
    </interactant>
    <organismsDiffer>false</organismsDiffer>
    <experiments>3</experiments>
</comment>
<comment type="interaction">
    <interactant intactId="EBI-19046912">
        <id>Q8NB16-2</id>
    </interactant>
    <interactant intactId="EBI-717048">
        <id>P60903</id>
        <label>S100A10</label>
    </interactant>
    <organismsDiffer>false</organismsDiffer>
    <experiments>3</experiments>
</comment>
<comment type="subcellular location">
    <subcellularLocation>
        <location evidence="9">Cytoplasm</location>
    </subcellularLocation>
    <subcellularLocation>
        <location evidence="9 11">Cell membrane</location>
    </subcellularLocation>
    <subcellularLocation>
        <location evidence="1">Nucleus</location>
    </subcellularLocation>
    <text evidence="1 9">Localizes to the cytoplasm and translocates to the plasma membrane on necroptosis induction (PubMed:24316671). Localizes to the nucleus in response to orthomyxoviruses infection (By similarity).</text>
</comment>
<comment type="alternative products">
    <event type="alternative splicing"/>
    <isoform>
        <id>Q8NB16-1</id>
        <name evidence="12 13">1</name>
        <sequence type="displayed"/>
    </isoform>
    <isoform>
        <id>Q8NB16-2</id>
        <name evidence="14">2</name>
        <sequence type="described" ref="VSP_052133 VSP_052134"/>
    </isoform>
</comment>
<comment type="domain">
    <text evidence="1">The protein kinase domain is catalytically inactive but contains an unusual pseudoactive site with an interaction between Lys-230 and Gln-356 residues (By similarity). Upon phosphorylation by RIPK3, undergoes an active conformation (By similarity).</text>
</comment>
<comment type="domain">
    <text evidence="9">The coiled coil region 2 is responsible for homotrimerization.</text>
</comment>
<comment type="PTM">
    <text evidence="5">Phosphorylation by RIPK3 induces a conformational switch that is required for necroptosis (PubMed:22265413). It also induces homotrimerization and localization to the plasma membrane (PubMed:22265413).</text>
</comment>
<comment type="miscellaneous">
    <text evidence="17">Interaction with RIPK3 is species specific: human MLKL only interacts with human RIPK3 and not mouse RIPK3.</text>
</comment>
<comment type="similarity">
    <text evidence="16">Belongs to the protein kinase superfamily.</text>
</comment>
<sequence>MENLKHIITLGQVIHKRCEEMKYCKKQCRRLGHRVLGLIKPLEMLQDQGKRSVPSEKLTTAMNRFKAALEEANGEIEKFSNRSNICRFLTASQDKILFKDVNRKLSDVWKELSLLLQVEQRMPVSPISQGASWAQEDQQDADEDRRAFQMLRRDNEKIEASLRRLEINMKEIKETLRQYLPPKCMQEIPQEQIKEIKKEQLSGSPWILLRENEVSTLYKGEYHRAPVAIKVFKKLQAGSIAIVRQTFNKEIKTMKKFESPNILRIFGICIDETVTPPQFSIVMEYCELGTLRELLDREKDLTLGKRMVLVLGAARGLYRLHHSEAPELHGKIRSSNFLVTQGYQVKLAGFELRKTQTSMSLGTTREKTDRVKSTAYLSPQELEDVFYQYDVKSEIYSFGIVLWEIATGDIPFQGCNSEKIRKLVAVKRQQEPLGEDCPSELREIIDECRAHDPSVRPSVDEILKKLSTFSK</sequence>
<organism>
    <name type="scientific">Homo sapiens</name>
    <name type="common">Human</name>
    <dbReference type="NCBI Taxonomy" id="9606"/>
    <lineage>
        <taxon>Eukaryota</taxon>
        <taxon>Metazoa</taxon>
        <taxon>Chordata</taxon>
        <taxon>Craniata</taxon>
        <taxon>Vertebrata</taxon>
        <taxon>Euteleostomi</taxon>
        <taxon>Mammalia</taxon>
        <taxon>Eutheria</taxon>
        <taxon>Euarchontoglires</taxon>
        <taxon>Primates</taxon>
        <taxon>Haplorrhini</taxon>
        <taxon>Catarrhini</taxon>
        <taxon>Hominidae</taxon>
        <taxon>Homo</taxon>
    </lineage>
</organism>
<protein>
    <recommendedName>
        <fullName evidence="16">Mixed lineage kinase domain-like protein</fullName>
        <shortName evidence="12">hMLKL</shortName>
    </recommendedName>
</protein>
<name>MLKL_HUMAN</name>
<proteinExistence type="evidence at protein level"/>